<organism>
    <name type="scientific">Mus musculus</name>
    <name type="common">Mouse</name>
    <dbReference type="NCBI Taxonomy" id="10090"/>
    <lineage>
        <taxon>Eukaryota</taxon>
        <taxon>Metazoa</taxon>
        <taxon>Chordata</taxon>
        <taxon>Craniata</taxon>
        <taxon>Vertebrata</taxon>
        <taxon>Euteleostomi</taxon>
        <taxon>Mammalia</taxon>
        <taxon>Eutheria</taxon>
        <taxon>Euarchontoglires</taxon>
        <taxon>Glires</taxon>
        <taxon>Rodentia</taxon>
        <taxon>Myomorpha</taxon>
        <taxon>Muroidea</taxon>
        <taxon>Muridae</taxon>
        <taxon>Murinae</taxon>
        <taxon>Mus</taxon>
        <taxon>Mus</taxon>
    </lineage>
</organism>
<dbReference type="EMBL" id="AC160400">
    <property type="status" value="NOT_ANNOTATED_CDS"/>
    <property type="molecule type" value="Genomic_DNA"/>
</dbReference>
<dbReference type="EMBL" id="AC159713">
    <property type="status" value="NOT_ANNOTATED_CDS"/>
    <property type="molecule type" value="Genomic_DNA"/>
</dbReference>
<dbReference type="SMR" id="E9Q3M5"/>
<dbReference type="FunCoup" id="E9Q3M5">
    <property type="interactions" value="113"/>
</dbReference>
<dbReference type="STRING" id="10090.ENSMUSP00000041007"/>
<dbReference type="iPTMnet" id="E9Q3M5"/>
<dbReference type="PhosphoSitePlus" id="E9Q3M5"/>
<dbReference type="jPOST" id="E9Q3M5"/>
<dbReference type="PaxDb" id="10090-ENSMUSP00000109533"/>
<dbReference type="ProteomicsDB" id="318027"/>
<dbReference type="Antibodypedia" id="47475">
    <property type="antibodies" value="64 antibodies from 17 providers"/>
</dbReference>
<dbReference type="Ensembl" id="ENSMUST00000113900.8">
    <property type="protein sequence ID" value="ENSMUSP00000109533.2"/>
    <property type="gene ID" value="ENSMUSG00000068323.13"/>
</dbReference>
<dbReference type="AGR" id="MGI:2443220"/>
<dbReference type="MGI" id="MGI:2443220">
    <property type="gene designation" value="Slc4a5"/>
</dbReference>
<dbReference type="VEuPathDB" id="HostDB:ENSMUSG00000068323"/>
<dbReference type="eggNOG" id="KOG1172">
    <property type="taxonomic scope" value="Eukaryota"/>
</dbReference>
<dbReference type="GeneTree" id="ENSGT00940000157488"/>
<dbReference type="InParanoid" id="E9Q3M5"/>
<dbReference type="OrthoDB" id="1735926at2759"/>
<dbReference type="PhylomeDB" id="E9Q3M5"/>
<dbReference type="TreeFam" id="TF313630"/>
<dbReference type="Reactome" id="R-MMU-425381">
    <property type="pathway name" value="Bicarbonate transporters"/>
</dbReference>
<dbReference type="ChiTaRS" id="Slc4a5">
    <property type="organism name" value="mouse"/>
</dbReference>
<dbReference type="PRO" id="PR:E9Q3M5"/>
<dbReference type="Proteomes" id="UP000000589">
    <property type="component" value="Chromosome 6"/>
</dbReference>
<dbReference type="RNAct" id="E9Q3M5">
    <property type="molecule type" value="protein"/>
</dbReference>
<dbReference type="Bgee" id="ENSMUSG00000068323">
    <property type="expression patterns" value="Expressed in choroid plexus of fourth ventricle and 67 other cell types or tissues"/>
</dbReference>
<dbReference type="ExpressionAtlas" id="E9Q3M5">
    <property type="expression patterns" value="baseline and differential"/>
</dbReference>
<dbReference type="GO" id="GO:0016324">
    <property type="term" value="C:apical plasma membrane"/>
    <property type="evidence" value="ECO:0000250"/>
    <property type="project" value="UniProtKB"/>
</dbReference>
<dbReference type="GO" id="GO:0016323">
    <property type="term" value="C:basolateral plasma membrane"/>
    <property type="evidence" value="ECO:0000250"/>
    <property type="project" value="UniProtKB"/>
</dbReference>
<dbReference type="GO" id="GO:0022853">
    <property type="term" value="F:active monoatomic ion transmembrane transporter activity"/>
    <property type="evidence" value="ECO:0007669"/>
    <property type="project" value="UniProtKB-ARBA"/>
</dbReference>
<dbReference type="GO" id="GO:0008509">
    <property type="term" value="F:monoatomic anion transmembrane transporter activity"/>
    <property type="evidence" value="ECO:0007669"/>
    <property type="project" value="InterPro"/>
</dbReference>
<dbReference type="GO" id="GO:0008510">
    <property type="term" value="F:sodium:bicarbonate symporter activity"/>
    <property type="evidence" value="ECO:0000314"/>
    <property type="project" value="UniProtKB"/>
</dbReference>
<dbReference type="GO" id="GO:0005452">
    <property type="term" value="F:solute:inorganic anion antiporter activity"/>
    <property type="evidence" value="ECO:0007669"/>
    <property type="project" value="InterPro"/>
</dbReference>
<dbReference type="GO" id="GO:0033326">
    <property type="term" value="P:cerebrospinal fluid secretion"/>
    <property type="evidence" value="ECO:0000315"/>
    <property type="project" value="MGI"/>
</dbReference>
<dbReference type="GO" id="GO:0002064">
    <property type="term" value="P:epithelial cell development"/>
    <property type="evidence" value="ECO:0000315"/>
    <property type="project" value="MGI"/>
</dbReference>
<dbReference type="GO" id="GO:0048311">
    <property type="term" value="P:mitochondrion distribution"/>
    <property type="evidence" value="ECO:0000315"/>
    <property type="project" value="MGI"/>
</dbReference>
<dbReference type="GO" id="GO:0006811">
    <property type="term" value="P:monoatomic ion transport"/>
    <property type="evidence" value="ECO:0000315"/>
    <property type="project" value="MGI"/>
</dbReference>
<dbReference type="GO" id="GO:0010468">
    <property type="term" value="P:regulation of gene expression"/>
    <property type="evidence" value="ECO:0000315"/>
    <property type="project" value="MGI"/>
</dbReference>
<dbReference type="GO" id="GO:0003073">
    <property type="term" value="P:regulation of systemic arterial blood pressure"/>
    <property type="evidence" value="ECO:0000315"/>
    <property type="project" value="MGI"/>
</dbReference>
<dbReference type="GO" id="GO:0003014">
    <property type="term" value="P:renal system process"/>
    <property type="evidence" value="ECO:0000315"/>
    <property type="project" value="MGI"/>
</dbReference>
<dbReference type="GO" id="GO:0060041">
    <property type="term" value="P:retina development in camera-type eye"/>
    <property type="evidence" value="ECO:0000315"/>
    <property type="project" value="MGI"/>
</dbReference>
<dbReference type="FunFam" id="1.10.287.570:FF:000001">
    <property type="entry name" value="Anion exchange protein"/>
    <property type="match status" value="1"/>
</dbReference>
<dbReference type="FunFam" id="3.40.930.10:FF:000002">
    <property type="entry name" value="Anion exchange protein"/>
    <property type="match status" value="1"/>
</dbReference>
<dbReference type="Gene3D" id="1.10.287.570">
    <property type="entry name" value="Helical hairpin bin"/>
    <property type="match status" value="1"/>
</dbReference>
<dbReference type="Gene3D" id="3.40.930.10">
    <property type="entry name" value="Mannitol-specific EII, Chain A"/>
    <property type="match status" value="1"/>
</dbReference>
<dbReference type="InterPro" id="IPR013769">
    <property type="entry name" value="Band3_cytoplasmic_dom"/>
</dbReference>
<dbReference type="InterPro" id="IPR011531">
    <property type="entry name" value="HCO3_transpt-like_TM_dom"/>
</dbReference>
<dbReference type="InterPro" id="IPR003020">
    <property type="entry name" value="HCO3_transpt_euk"/>
</dbReference>
<dbReference type="InterPro" id="IPR003024">
    <property type="entry name" value="Na/HCO3_transpt"/>
</dbReference>
<dbReference type="InterPro" id="IPR016152">
    <property type="entry name" value="PTrfase/Anion_transptr"/>
</dbReference>
<dbReference type="NCBIfam" id="TIGR00834">
    <property type="entry name" value="ae"/>
    <property type="match status" value="1"/>
</dbReference>
<dbReference type="PANTHER" id="PTHR11453">
    <property type="entry name" value="ANION EXCHANGE PROTEIN"/>
    <property type="match status" value="1"/>
</dbReference>
<dbReference type="PANTHER" id="PTHR11453:SF20">
    <property type="entry name" value="ELECTROGENIC SODIUM BICARBONATE COTRANSPORTER 4"/>
    <property type="match status" value="1"/>
</dbReference>
<dbReference type="Pfam" id="PF07565">
    <property type="entry name" value="Band_3_cyto"/>
    <property type="match status" value="1"/>
</dbReference>
<dbReference type="Pfam" id="PF00955">
    <property type="entry name" value="HCO3_cotransp"/>
    <property type="match status" value="1"/>
</dbReference>
<dbReference type="PRINTS" id="PR01231">
    <property type="entry name" value="HCO3TRNSPORT"/>
</dbReference>
<dbReference type="PRINTS" id="PR01232">
    <property type="entry name" value="NAHCO3TRSPRT"/>
</dbReference>
<dbReference type="SUPFAM" id="SSF55804">
    <property type="entry name" value="Phoshotransferase/anion transport protein"/>
    <property type="match status" value="1"/>
</dbReference>
<proteinExistence type="evidence at protein level"/>
<comment type="function">
    <text evidence="5">Mediates sodium- and bicarbonate-dependent electrogenic sodium bicarbonate cotransport, with a Na(+):HCO3(-) stoichiometry varying from 1:2 to 1:3.</text>
</comment>
<comment type="catalytic activity">
    <reaction evidence="2">
        <text>2 hydrogencarbonate(out) + Na(+)(out) = 2 hydrogencarbonate(in) + Na(+)(in)</text>
        <dbReference type="Rhea" id="RHEA:72215"/>
        <dbReference type="ChEBI" id="CHEBI:17544"/>
        <dbReference type="ChEBI" id="CHEBI:29101"/>
    </reaction>
</comment>
<comment type="catalytic activity">
    <reaction evidence="5">
        <text>3 hydrogencarbonate(out) + Na(+)(out) = 3 hydrogencarbonate(in) + Na(+)(in)</text>
        <dbReference type="Rhea" id="RHEA:72219"/>
        <dbReference type="ChEBI" id="CHEBI:17544"/>
        <dbReference type="ChEBI" id="CHEBI:29101"/>
    </reaction>
</comment>
<comment type="subcellular location">
    <subcellularLocation>
        <location evidence="2">Apical cell membrane</location>
        <topology evidence="3">Multi-pass membrane protein</topology>
    </subcellularLocation>
    <subcellularLocation>
        <location evidence="1">Basolateral cell membrane</location>
        <topology evidence="3">Multi-pass membrane protein</topology>
    </subcellularLocation>
    <text evidence="1">Localized predominantly to the basolateral sinusoidal membrane in hepatocytes.</text>
</comment>
<comment type="similarity">
    <text evidence="3">Belongs to the anion exchanger (TC 2.A.31) family.</text>
</comment>
<gene>
    <name type="primary">Slc4a5</name>
</gene>
<reference key="1">
    <citation type="journal article" date="2009" name="PLoS Biol.">
        <title>Lineage-specific biology revealed by a finished genome assembly of the mouse.</title>
        <authorList>
            <person name="Church D.M."/>
            <person name="Goodstadt L."/>
            <person name="Hillier L.W."/>
            <person name="Zody M.C."/>
            <person name="Goldstein S."/>
            <person name="She X."/>
            <person name="Bult C.J."/>
            <person name="Agarwala R."/>
            <person name="Cherry J.L."/>
            <person name="DiCuccio M."/>
            <person name="Hlavina W."/>
            <person name="Kapustin Y."/>
            <person name="Meric P."/>
            <person name="Maglott D."/>
            <person name="Birtle Z."/>
            <person name="Marques A.C."/>
            <person name="Graves T."/>
            <person name="Zhou S."/>
            <person name="Teague B."/>
            <person name="Potamousis K."/>
            <person name="Churas C."/>
            <person name="Place M."/>
            <person name="Herschleb J."/>
            <person name="Runnheim R."/>
            <person name="Forrest D."/>
            <person name="Amos-Landgraf J."/>
            <person name="Schwartz D.C."/>
            <person name="Cheng Z."/>
            <person name="Lindblad-Toh K."/>
            <person name="Eichler E.E."/>
            <person name="Ponting C.P."/>
        </authorList>
    </citation>
    <scope>NUCLEOTIDE SEQUENCE [LARGE SCALE GENOMIC DNA]</scope>
    <source>
        <strain>C57BL/6J</strain>
    </source>
</reference>
<reference key="2">
    <citation type="journal article" date="2008" name="Biochem. Biophys. Res. Commun.">
        <title>NBCe2 exhibits a 3 HCO3(-):1 Na+ stoichiometry in mouse choroid plexus epithelial cells.</title>
        <authorList>
            <person name="Millar I.D."/>
            <person name="Brown P.D."/>
        </authorList>
    </citation>
    <scope>FUNCTION</scope>
    <scope>TRANSPORTER ACTIVITY</scope>
    <scope>ACTIVITY REGULATION</scope>
</reference>
<reference key="3">
    <citation type="journal article" date="2010" name="Cell">
        <title>A tissue-specific atlas of mouse protein phosphorylation and expression.</title>
        <authorList>
            <person name="Huttlin E.L."/>
            <person name="Jedrychowski M.P."/>
            <person name="Elias J.E."/>
            <person name="Goswami T."/>
            <person name="Rad R."/>
            <person name="Beausoleil S.A."/>
            <person name="Villen J."/>
            <person name="Haas W."/>
            <person name="Sowa M.E."/>
            <person name="Gygi S.P."/>
        </authorList>
    </citation>
    <scope>IDENTIFICATION BY MASS SPECTROMETRY [LARGE SCALE ANALYSIS]</scope>
</reference>
<sequence length="1116" mass="124186">MKVDEEKAGVKKLDPTSYKRRQPEQDFPSIHIGFPVPSYSQRKSDSKGHLSGLQKVQWSLKPGKPQQELAGPGIRASSQGGAVDFTKRTRSPAAEQLQDILGEEDEAPNPTLFTEMDTLQHDGDQMEWKESARWIKFEEKVEEGGERWSKPHVSTLSLHSLFELRTCLQTGTVLLDLDSCSLPQIIDDVIEKQIEDGLLRPELRERVSYVLLRKHRHQTKKPIHRSLADIGKSVSTTNRSSARSSSAGPTLHRSTEDLRIRQSTSYGHLCHAQSRSMNDISHTPNTDQRKNKFMKKIPKDSEASNVLVGEVDFLDQPFIAFVRLVQSAMLGGVTEVPVPTRFLFILLGPSGRAKSYNEIGRAIATLMVDDLFSDVAYKARNREDLIAGIDEFLDEVIVLPPGEWDPNIRIEPPKKVPSADKRKSVFSLAEPGQMNGSVGGGGASAGGGGSGGGAGGSGAGGVGSGDEAEMPAMHEIGEELIWTGRFFGGLCLDVKRKLPWFPSDFYDGFHLQSISAVLFIYLGCITNAITFGGLLGDATDNYQGVMESFLGTAMAGSLFCLFSGQPLIILSSTGPILIFEKLLFDFSKANGLDYMEFRLWIGLHSAIQCLILVATDASFIIKYITRFTEEGFSTLISFIFIYDAIKKMIGAFKYYPINTDFKPDFITTYKCECVAPDTVNTTTVNASAPLAPNTNTSLYTPLNLTALDWSLLSKKECLSYGGRLLGSSCQFVPDLALMSFILFFGTYSMTLTLKKFKFSRYFPTKVRTLVADFSIVFSILLFCGIDACFGLQTPKLHVPSVIKPTRPDRGWFVAPFGKNPWWVYPASILPALLVTILIFMDQQITAVIVNRKENKLRKAAGYHLDLFWVGILMALCSFTGLPWYVAATVISIAHIDSLKMETETSAPGEQPQFLGVREQRVTGVMVFILTGISVFLAPILKYIPMPVLYGVFLYMGVASLNGIQFWERCKLFLMPAKHQPDHAFLRHVPLRRIHLFTLVQILCLALLWILKSTMAAIIFPVMILGLIIVRRLLDLIFSQHDLAWIDNILPEKDKKETDKKKKRRKEVHETAEKEVAMPQFLPPSVVKIPMEGIPSDPQNGIHCVARKRSSSWSYSL</sequence>
<feature type="chain" id="PRO_0000456689" description="Electrogenic sodium bicarbonate cotransporter 4">
    <location>
        <begin position="1"/>
        <end position="1116"/>
    </location>
</feature>
<feature type="topological domain" description="Cytoplasmic" evidence="6">
    <location>
        <begin position="1"/>
        <end position="515"/>
    </location>
</feature>
<feature type="transmembrane region" description="Helical" evidence="3">
    <location>
        <begin position="516"/>
        <end position="536"/>
    </location>
</feature>
<feature type="topological domain" description="Extracellular" evidence="6">
    <location>
        <begin position="537"/>
        <end position="558"/>
    </location>
</feature>
<feature type="transmembrane region" description="Helical" evidence="3">
    <location>
        <begin position="559"/>
        <end position="579"/>
    </location>
</feature>
<feature type="topological domain" description="Cytoplasmic" evidence="6">
    <location>
        <begin position="580"/>
        <end position="600"/>
    </location>
</feature>
<feature type="transmembrane region" description="Helical" evidence="3">
    <location>
        <begin position="601"/>
        <end position="621"/>
    </location>
</feature>
<feature type="topological domain" description="Extracellular" evidence="6">
    <location>
        <begin position="622"/>
        <end position="631"/>
    </location>
</feature>
<feature type="transmembrane region" description="Helical" evidence="3">
    <location>
        <begin position="632"/>
        <end position="652"/>
    </location>
</feature>
<feature type="topological domain" description="Cytoplasmic" evidence="6">
    <location>
        <begin position="653"/>
        <end position="730"/>
    </location>
</feature>
<feature type="transmembrane region" description="Helical" evidence="3">
    <location>
        <begin position="731"/>
        <end position="751"/>
    </location>
</feature>
<feature type="topological domain" description="Extracellular" evidence="6">
    <location>
        <begin position="752"/>
        <end position="768"/>
    </location>
</feature>
<feature type="transmembrane region" description="Helical" evidence="3">
    <location>
        <begin position="769"/>
        <end position="789"/>
    </location>
</feature>
<feature type="topological domain" description="Cytoplasmic" evidence="6">
    <location>
        <begin position="790"/>
        <end position="819"/>
    </location>
</feature>
<feature type="transmembrane region" description="Helical" evidence="3">
    <location>
        <begin position="820"/>
        <end position="840"/>
    </location>
</feature>
<feature type="topological domain" description="Extracellular" evidence="6">
    <location>
        <begin position="841"/>
        <end position="865"/>
    </location>
</feature>
<feature type="transmembrane region" description="Helical" evidence="3">
    <location>
        <begin position="866"/>
        <end position="886"/>
    </location>
</feature>
<feature type="topological domain" description="Cytoplasmic" evidence="6">
    <location>
        <begin position="887"/>
        <end position="922"/>
    </location>
</feature>
<feature type="transmembrane region" description="Helical" evidence="3">
    <location>
        <begin position="923"/>
        <end position="943"/>
    </location>
</feature>
<feature type="topological domain" description="Extracellular" evidence="6">
    <location>
        <begin position="944"/>
        <end position="945"/>
    </location>
</feature>
<feature type="transmembrane region" description="Helical" evidence="3">
    <location>
        <begin position="946"/>
        <end position="966"/>
    </location>
</feature>
<feature type="topological domain" description="Cytoplasmic" evidence="6">
    <location>
        <begin position="967"/>
        <end position="987"/>
    </location>
</feature>
<feature type="transmembrane region" description="Helical" evidence="3">
    <location>
        <begin position="988"/>
        <end position="1008"/>
    </location>
</feature>
<feature type="transmembrane region" description="Helical" evidence="3">
    <location>
        <begin position="1009"/>
        <end position="1029"/>
    </location>
</feature>
<feature type="topological domain" description="Cytoplasmic" evidence="6">
    <location>
        <begin position="1030"/>
        <end position="1116"/>
    </location>
</feature>
<feature type="region of interest" description="Disordered" evidence="4">
    <location>
        <begin position="1"/>
        <end position="92"/>
    </location>
</feature>
<feature type="region of interest" description="Disordered" evidence="4">
    <location>
        <begin position="222"/>
        <end position="257"/>
    </location>
</feature>
<feature type="region of interest" description="Disordered" evidence="4">
    <location>
        <begin position="431"/>
        <end position="467"/>
    </location>
</feature>
<feature type="compositionally biased region" description="Basic and acidic residues" evidence="4">
    <location>
        <begin position="1"/>
        <end position="14"/>
    </location>
</feature>
<feature type="compositionally biased region" description="Low complexity" evidence="4">
    <location>
        <begin position="233"/>
        <end position="247"/>
    </location>
</feature>
<feature type="compositionally biased region" description="Gly residues" evidence="4">
    <location>
        <begin position="437"/>
        <end position="464"/>
    </location>
</feature>
<keyword id="KW-0039">Anion exchange</keyword>
<keyword id="KW-1003">Cell membrane</keyword>
<keyword id="KW-0406">Ion transport</keyword>
<keyword id="KW-0472">Membrane</keyword>
<keyword id="KW-1185">Reference proteome</keyword>
<keyword id="KW-0915">Sodium</keyword>
<keyword id="KW-0739">Sodium transport</keyword>
<keyword id="KW-0812">Transmembrane</keyword>
<keyword id="KW-1133">Transmembrane helix</keyword>
<keyword id="KW-0813">Transport</keyword>
<protein>
    <recommendedName>
        <fullName>Electrogenic sodium bicarbonate cotransporter 4</fullName>
    </recommendedName>
    <alternativeName>
        <fullName>Anion exchange protein</fullName>
    </alternativeName>
    <alternativeName>
        <fullName>Solute carrier family 4 member 5</fullName>
    </alternativeName>
</protein>
<evidence type="ECO:0000250" key="1">
    <source>
        <dbReference type="UniProtKB" id="Q6RI88"/>
    </source>
</evidence>
<evidence type="ECO:0000250" key="2">
    <source>
        <dbReference type="UniProtKB" id="Q9BY07"/>
    </source>
</evidence>
<evidence type="ECO:0000255" key="3"/>
<evidence type="ECO:0000256" key="4">
    <source>
        <dbReference type="SAM" id="MobiDB-lite"/>
    </source>
</evidence>
<evidence type="ECO:0000269" key="5">
    <source>
    </source>
</evidence>
<evidence type="ECO:0000305" key="6"/>
<accession>E9Q3M5</accession>
<name>S4A5_MOUSE</name>